<protein>
    <recommendedName>
        <fullName evidence="1">Large ribosomal subunit protein uL4</fullName>
    </recommendedName>
    <alternativeName>
        <fullName evidence="4">50S ribosomal protein L4</fullName>
    </alternativeName>
</protein>
<name>RL4_BACSU</name>
<accession>P42921</accession>
<evidence type="ECO:0000255" key="1">
    <source>
        <dbReference type="HAMAP-Rule" id="MF_01328"/>
    </source>
</evidence>
<evidence type="ECO:0000256" key="2">
    <source>
        <dbReference type="SAM" id="MobiDB-lite"/>
    </source>
</evidence>
<evidence type="ECO:0000269" key="3">
    <source>
    </source>
</evidence>
<evidence type="ECO:0000305" key="4"/>
<evidence type="ECO:0007744" key="5">
    <source>
        <dbReference type="PDB" id="6HA1"/>
    </source>
</evidence>
<evidence type="ECO:0007744" key="6">
    <source>
        <dbReference type="PDB" id="6HA8"/>
    </source>
</evidence>
<evidence type="ECO:0007829" key="7">
    <source>
        <dbReference type="PDB" id="6PPF"/>
    </source>
</evidence>
<evidence type="ECO:0007829" key="8">
    <source>
        <dbReference type="PDB" id="6TNN"/>
    </source>
</evidence>
<evidence type="ECO:0007829" key="9">
    <source>
        <dbReference type="PDB" id="7AQC"/>
    </source>
</evidence>
<evidence type="ECO:0007829" key="10">
    <source>
        <dbReference type="PDB" id="7AS8"/>
    </source>
</evidence>
<evidence type="ECO:0007829" key="11">
    <source>
        <dbReference type="PDB" id="8S1P"/>
    </source>
</evidence>
<proteinExistence type="evidence at protein level"/>
<dbReference type="EMBL" id="U43929">
    <property type="protein sequence ID" value="AAC45957.1"/>
    <property type="molecule type" value="Genomic_DNA"/>
</dbReference>
<dbReference type="EMBL" id="D50302">
    <property type="protein sequence ID" value="BAA08832.1"/>
    <property type="molecule type" value="Genomic_DNA"/>
</dbReference>
<dbReference type="EMBL" id="AL009126">
    <property type="protein sequence ID" value="CAB11893.1"/>
    <property type="molecule type" value="Genomic_DNA"/>
</dbReference>
<dbReference type="PIR" id="H69694">
    <property type="entry name" value="H69694"/>
</dbReference>
<dbReference type="RefSeq" id="NP_387998.1">
    <property type="nucleotide sequence ID" value="NC_000964.3"/>
</dbReference>
<dbReference type="RefSeq" id="WP_004399658.1">
    <property type="nucleotide sequence ID" value="NZ_OZ025638.1"/>
</dbReference>
<dbReference type="PDB" id="3J3V">
    <property type="method" value="EM"/>
    <property type="resolution" value="13.30 A"/>
    <property type="chains" value="E=1-207"/>
</dbReference>
<dbReference type="PDB" id="3J3W">
    <property type="method" value="EM"/>
    <property type="resolution" value="10.70 A"/>
    <property type="chains" value="E=1-207"/>
</dbReference>
<dbReference type="PDB" id="3J9W">
    <property type="method" value="EM"/>
    <property type="resolution" value="3.90 A"/>
    <property type="chains" value="BF=1-207"/>
</dbReference>
<dbReference type="PDB" id="5NJT">
    <property type="method" value="EM"/>
    <property type="resolution" value="3.80 A"/>
    <property type="chains" value="Y=2-206"/>
</dbReference>
<dbReference type="PDB" id="6HA1">
    <property type="method" value="EM"/>
    <property type="resolution" value="3.10 A"/>
    <property type="chains" value="E=1-207"/>
</dbReference>
<dbReference type="PDB" id="6HA8">
    <property type="method" value="EM"/>
    <property type="resolution" value="3.50 A"/>
    <property type="chains" value="E=1-207"/>
</dbReference>
<dbReference type="PDB" id="6HTQ">
    <property type="method" value="EM"/>
    <property type="resolution" value="4.50 A"/>
    <property type="chains" value="E=2-206"/>
</dbReference>
<dbReference type="PDB" id="6PPF">
    <property type="method" value="EM"/>
    <property type="resolution" value="3.40 A"/>
    <property type="chains" value="E=1-207"/>
</dbReference>
<dbReference type="PDB" id="6PPK">
    <property type="method" value="EM"/>
    <property type="resolution" value="4.40 A"/>
    <property type="chains" value="E=1-207"/>
</dbReference>
<dbReference type="PDB" id="6PVK">
    <property type="method" value="EM"/>
    <property type="resolution" value="3.40 A"/>
    <property type="chains" value="E=1-207"/>
</dbReference>
<dbReference type="PDB" id="6TNN">
    <property type="method" value="EM"/>
    <property type="resolution" value="3.07 A"/>
    <property type="chains" value="Y=1-207"/>
</dbReference>
<dbReference type="PDB" id="6TPQ">
    <property type="method" value="EM"/>
    <property type="resolution" value="3.07 A"/>
    <property type="chains" value="Y=1-207"/>
</dbReference>
<dbReference type="PDB" id="7AQC">
    <property type="method" value="EM"/>
    <property type="resolution" value="2.99 A"/>
    <property type="chains" value="E=1-207"/>
</dbReference>
<dbReference type="PDB" id="7AQD">
    <property type="method" value="EM"/>
    <property type="resolution" value="3.10 A"/>
    <property type="chains" value="E=1-207"/>
</dbReference>
<dbReference type="PDB" id="7AS8">
    <property type="method" value="EM"/>
    <property type="resolution" value="2.90 A"/>
    <property type="chains" value="G=1-207"/>
</dbReference>
<dbReference type="PDB" id="7AS9">
    <property type="method" value="EM"/>
    <property type="resolution" value="3.50 A"/>
    <property type="chains" value="G=1-207"/>
</dbReference>
<dbReference type="PDB" id="7O5B">
    <property type="method" value="EM"/>
    <property type="resolution" value="3.33 A"/>
    <property type="chains" value="b=1-207"/>
</dbReference>
<dbReference type="PDB" id="7OPE">
    <property type="method" value="EM"/>
    <property type="resolution" value="3.20 A"/>
    <property type="chains" value="G=1-207"/>
</dbReference>
<dbReference type="PDB" id="7QGU">
    <property type="method" value="EM"/>
    <property type="resolution" value="4.75 A"/>
    <property type="chains" value="E=1-207"/>
</dbReference>
<dbReference type="PDB" id="7QH4">
    <property type="method" value="EM"/>
    <property type="resolution" value="5.45 A"/>
    <property type="chains" value="E=1-207"/>
</dbReference>
<dbReference type="PDB" id="7QV1">
    <property type="method" value="EM"/>
    <property type="resolution" value="3.50 A"/>
    <property type="chains" value="E=1-207"/>
</dbReference>
<dbReference type="PDB" id="7QV2">
    <property type="method" value="EM"/>
    <property type="resolution" value="3.50 A"/>
    <property type="chains" value="E=1-207"/>
</dbReference>
<dbReference type="PDB" id="7QV3">
    <property type="method" value="EM"/>
    <property type="resolution" value="5.14 A"/>
    <property type="chains" value="E=1-207"/>
</dbReference>
<dbReference type="PDB" id="7S9U">
    <property type="method" value="EM"/>
    <property type="resolution" value="3.20 A"/>
    <property type="chains" value="E=1-207"/>
</dbReference>
<dbReference type="PDB" id="7SAE">
    <property type="method" value="EM"/>
    <property type="resolution" value="3.00 A"/>
    <property type="chains" value="E=1-207"/>
</dbReference>
<dbReference type="PDB" id="8BUU">
    <property type="method" value="EM"/>
    <property type="resolution" value="2.90 A"/>
    <property type="chains" value="E=1-207"/>
</dbReference>
<dbReference type="PDB" id="8QCQ">
    <property type="method" value="EM"/>
    <property type="resolution" value="2.30 A"/>
    <property type="chains" value="E=1-207"/>
</dbReference>
<dbReference type="PDB" id="8QPP">
    <property type="method" value="EM"/>
    <property type="resolution" value="3.40 A"/>
    <property type="chains" value="b=2-206"/>
</dbReference>
<dbReference type="PDB" id="8R55">
    <property type="method" value="EM"/>
    <property type="resolution" value="3.57 A"/>
    <property type="chains" value="b=2-206"/>
</dbReference>
<dbReference type="PDB" id="8S1P">
    <property type="method" value="EM"/>
    <property type="resolution" value="1.96 A"/>
    <property type="chains" value="E=1-207"/>
</dbReference>
<dbReference type="PDB" id="8S1U">
    <property type="method" value="EM"/>
    <property type="resolution" value="3.40 A"/>
    <property type="chains" value="E=1-207"/>
</dbReference>
<dbReference type="PDB" id="9BS0">
    <property type="method" value="EM"/>
    <property type="resolution" value="3.30 A"/>
    <property type="chains" value="E=1-207"/>
</dbReference>
<dbReference type="PDB" id="9BSL">
    <property type="method" value="EM"/>
    <property type="resolution" value="3.10 A"/>
    <property type="chains" value="E=1-207"/>
</dbReference>
<dbReference type="PDB" id="9BSS">
    <property type="method" value="EM"/>
    <property type="resolution" value="3.10 A"/>
    <property type="chains" value="E=1-207"/>
</dbReference>
<dbReference type="PDBsum" id="3J3V"/>
<dbReference type="PDBsum" id="3J3W"/>
<dbReference type="PDBsum" id="3J9W"/>
<dbReference type="PDBsum" id="5NJT"/>
<dbReference type="PDBsum" id="6HA1"/>
<dbReference type="PDBsum" id="6HA8"/>
<dbReference type="PDBsum" id="6HTQ"/>
<dbReference type="PDBsum" id="6PPF"/>
<dbReference type="PDBsum" id="6PPK"/>
<dbReference type="PDBsum" id="6PVK"/>
<dbReference type="PDBsum" id="6TNN"/>
<dbReference type="PDBsum" id="6TPQ"/>
<dbReference type="PDBsum" id="7AQC"/>
<dbReference type="PDBsum" id="7AQD"/>
<dbReference type="PDBsum" id="7AS8"/>
<dbReference type="PDBsum" id="7AS9"/>
<dbReference type="PDBsum" id="7O5B"/>
<dbReference type="PDBsum" id="7OPE"/>
<dbReference type="PDBsum" id="7QGU"/>
<dbReference type="PDBsum" id="7QH4"/>
<dbReference type="PDBsum" id="7QV1"/>
<dbReference type="PDBsum" id="7QV2"/>
<dbReference type="PDBsum" id="7QV3"/>
<dbReference type="PDBsum" id="7S9U"/>
<dbReference type="PDBsum" id="7SAE"/>
<dbReference type="PDBsum" id="8BUU"/>
<dbReference type="PDBsum" id="8QCQ"/>
<dbReference type="PDBsum" id="8QPP"/>
<dbReference type="PDBsum" id="8R55"/>
<dbReference type="PDBsum" id="8S1P"/>
<dbReference type="PDBsum" id="8S1U"/>
<dbReference type="PDBsum" id="9BS0"/>
<dbReference type="PDBsum" id="9BSL"/>
<dbReference type="PDBsum" id="9BSS"/>
<dbReference type="EMDB" id="EMD-0176"/>
<dbReference type="EMDB" id="EMD-0177"/>
<dbReference type="EMDB" id="EMD-0270"/>
<dbReference type="EMDB" id="EMD-10535"/>
<dbReference type="EMDB" id="EMD-10543"/>
<dbReference type="EMDB" id="EMD-11862"/>
<dbReference type="EMDB" id="EMD-11864"/>
<dbReference type="EMDB" id="EMD-11889"/>
<dbReference type="EMDB" id="EMD-11890"/>
<dbReference type="EMDB" id="EMD-12734"/>
<dbReference type="EMDB" id="EMD-13017"/>
<dbReference type="EMDB" id="EMD-14157"/>
<dbReference type="EMDB" id="EMD-14158"/>
<dbReference type="EMDB" id="EMD-14159"/>
<dbReference type="EMDB" id="EMD-16246"/>
<dbReference type="EMDB" id="EMD-18332"/>
<dbReference type="EMDB" id="EMD-19638"/>
<dbReference type="EMDB" id="EMD-19641"/>
<dbReference type="EMDB" id="EMD-3656"/>
<dbReference type="EMDB" id="EMD-44849"/>
<dbReference type="EMDB" id="EMD-44869"/>
<dbReference type="EMDB" id="EMD-44871"/>
<dbReference type="SMR" id="P42921"/>
<dbReference type="FunCoup" id="P42921">
    <property type="interactions" value="673"/>
</dbReference>
<dbReference type="IntAct" id="P42921">
    <property type="interactions" value="1"/>
</dbReference>
<dbReference type="STRING" id="224308.BSU01170"/>
<dbReference type="jPOST" id="P42921"/>
<dbReference type="PaxDb" id="224308-BSU01170"/>
<dbReference type="EnsemblBacteria" id="CAB11893">
    <property type="protein sequence ID" value="CAB11893"/>
    <property type="gene ID" value="BSU_01170"/>
</dbReference>
<dbReference type="GeneID" id="86875485"/>
<dbReference type="GeneID" id="936690"/>
<dbReference type="KEGG" id="bsu:BSU01170"/>
<dbReference type="PATRIC" id="fig|224308.179.peg.120"/>
<dbReference type="eggNOG" id="COG0088">
    <property type="taxonomic scope" value="Bacteria"/>
</dbReference>
<dbReference type="InParanoid" id="P42921"/>
<dbReference type="OrthoDB" id="9803201at2"/>
<dbReference type="PhylomeDB" id="P42921"/>
<dbReference type="BioCyc" id="BSUB:BSU01170-MONOMER"/>
<dbReference type="EvolutionaryTrace" id="P42921"/>
<dbReference type="Proteomes" id="UP000001570">
    <property type="component" value="Chromosome"/>
</dbReference>
<dbReference type="GO" id="GO:1990904">
    <property type="term" value="C:ribonucleoprotein complex"/>
    <property type="evidence" value="ECO:0007669"/>
    <property type="project" value="UniProtKB-KW"/>
</dbReference>
<dbReference type="GO" id="GO:0005840">
    <property type="term" value="C:ribosome"/>
    <property type="evidence" value="ECO:0007669"/>
    <property type="project" value="UniProtKB-KW"/>
</dbReference>
<dbReference type="GO" id="GO:0019843">
    <property type="term" value="F:rRNA binding"/>
    <property type="evidence" value="ECO:0007669"/>
    <property type="project" value="UniProtKB-UniRule"/>
</dbReference>
<dbReference type="GO" id="GO:0003735">
    <property type="term" value="F:structural constituent of ribosome"/>
    <property type="evidence" value="ECO:0000318"/>
    <property type="project" value="GO_Central"/>
</dbReference>
<dbReference type="GO" id="GO:0006412">
    <property type="term" value="P:translation"/>
    <property type="evidence" value="ECO:0007669"/>
    <property type="project" value="UniProtKB-UniRule"/>
</dbReference>
<dbReference type="FunFam" id="3.40.1370.10:FF:000003">
    <property type="entry name" value="50S ribosomal protein L4"/>
    <property type="match status" value="1"/>
</dbReference>
<dbReference type="Gene3D" id="3.40.1370.10">
    <property type="match status" value="1"/>
</dbReference>
<dbReference type="HAMAP" id="MF_01328_B">
    <property type="entry name" value="Ribosomal_uL4_B"/>
    <property type="match status" value="1"/>
</dbReference>
<dbReference type="InterPro" id="IPR002136">
    <property type="entry name" value="Ribosomal_uL4"/>
</dbReference>
<dbReference type="InterPro" id="IPR013005">
    <property type="entry name" value="Ribosomal_uL4-like"/>
</dbReference>
<dbReference type="InterPro" id="IPR023574">
    <property type="entry name" value="Ribosomal_uL4_dom_sf"/>
</dbReference>
<dbReference type="NCBIfam" id="TIGR03953">
    <property type="entry name" value="rplD_bact"/>
    <property type="match status" value="1"/>
</dbReference>
<dbReference type="PANTHER" id="PTHR10746">
    <property type="entry name" value="50S RIBOSOMAL PROTEIN L4"/>
    <property type="match status" value="1"/>
</dbReference>
<dbReference type="PANTHER" id="PTHR10746:SF6">
    <property type="entry name" value="LARGE RIBOSOMAL SUBUNIT PROTEIN UL4M"/>
    <property type="match status" value="1"/>
</dbReference>
<dbReference type="Pfam" id="PF00573">
    <property type="entry name" value="Ribosomal_L4"/>
    <property type="match status" value="1"/>
</dbReference>
<dbReference type="SUPFAM" id="SSF52166">
    <property type="entry name" value="Ribosomal protein L4"/>
    <property type="match status" value="1"/>
</dbReference>
<gene>
    <name evidence="1" type="primary">rplD</name>
    <name type="ordered locus">BSU01170</name>
</gene>
<organism>
    <name type="scientific">Bacillus subtilis (strain 168)</name>
    <dbReference type="NCBI Taxonomy" id="224308"/>
    <lineage>
        <taxon>Bacteria</taxon>
        <taxon>Bacillati</taxon>
        <taxon>Bacillota</taxon>
        <taxon>Bacilli</taxon>
        <taxon>Bacillales</taxon>
        <taxon>Bacillaceae</taxon>
        <taxon>Bacillus</taxon>
    </lineage>
</organism>
<reference key="1">
    <citation type="journal article" date="1997" name="J. Bacteriol.">
        <title>Analysis of the Bacillus subtilis S10 ribosomal protein gene cluster identifies two promoters that may be responsible for transcription of the entire 15-kilobase S10-spc-alpha cluster.</title>
        <authorList>
            <person name="Li X."/>
            <person name="Lindahl L."/>
            <person name="Sha Y."/>
            <person name="Zengel J.M."/>
        </authorList>
    </citation>
    <scope>NUCLEOTIDE SEQUENCE [GENOMIC DNA]</scope>
    <source>
        <strain>SG38</strain>
    </source>
</reference>
<reference key="2">
    <citation type="journal article" date="1996" name="Microbiology">
        <title>Sequence analysis of a 50 kb region between spo0H and rrnH on the Bacillus subtilis chromosome.</title>
        <authorList>
            <person name="Yasumoto K."/>
            <person name="Liu H."/>
            <person name="Jeong S.M."/>
            <person name="Ohashi Y."/>
            <person name="Kakinuma S."/>
            <person name="Tanaka K."/>
            <person name="Kawamura F."/>
            <person name="Yoshikawa H."/>
            <person name="Takahashi H."/>
        </authorList>
    </citation>
    <scope>NUCLEOTIDE SEQUENCE [GENOMIC DNA]</scope>
    <source>
        <strain>168</strain>
    </source>
</reference>
<reference key="3">
    <citation type="journal article" date="1997" name="Nature">
        <title>The complete genome sequence of the Gram-positive bacterium Bacillus subtilis.</title>
        <authorList>
            <person name="Kunst F."/>
            <person name="Ogasawara N."/>
            <person name="Moszer I."/>
            <person name="Albertini A.M."/>
            <person name="Alloni G."/>
            <person name="Azevedo V."/>
            <person name="Bertero M.G."/>
            <person name="Bessieres P."/>
            <person name="Bolotin A."/>
            <person name="Borchert S."/>
            <person name="Borriss R."/>
            <person name="Boursier L."/>
            <person name="Brans A."/>
            <person name="Braun M."/>
            <person name="Brignell S.C."/>
            <person name="Bron S."/>
            <person name="Brouillet S."/>
            <person name="Bruschi C.V."/>
            <person name="Caldwell B."/>
            <person name="Capuano V."/>
            <person name="Carter N.M."/>
            <person name="Choi S.-K."/>
            <person name="Codani J.-J."/>
            <person name="Connerton I.F."/>
            <person name="Cummings N.J."/>
            <person name="Daniel R.A."/>
            <person name="Denizot F."/>
            <person name="Devine K.M."/>
            <person name="Duesterhoeft A."/>
            <person name="Ehrlich S.D."/>
            <person name="Emmerson P.T."/>
            <person name="Entian K.-D."/>
            <person name="Errington J."/>
            <person name="Fabret C."/>
            <person name="Ferrari E."/>
            <person name="Foulger D."/>
            <person name="Fritz C."/>
            <person name="Fujita M."/>
            <person name="Fujita Y."/>
            <person name="Fuma S."/>
            <person name="Galizzi A."/>
            <person name="Galleron N."/>
            <person name="Ghim S.-Y."/>
            <person name="Glaser P."/>
            <person name="Goffeau A."/>
            <person name="Golightly E.J."/>
            <person name="Grandi G."/>
            <person name="Guiseppi G."/>
            <person name="Guy B.J."/>
            <person name="Haga K."/>
            <person name="Haiech J."/>
            <person name="Harwood C.R."/>
            <person name="Henaut A."/>
            <person name="Hilbert H."/>
            <person name="Holsappel S."/>
            <person name="Hosono S."/>
            <person name="Hullo M.-F."/>
            <person name="Itaya M."/>
            <person name="Jones L.-M."/>
            <person name="Joris B."/>
            <person name="Karamata D."/>
            <person name="Kasahara Y."/>
            <person name="Klaerr-Blanchard M."/>
            <person name="Klein C."/>
            <person name="Kobayashi Y."/>
            <person name="Koetter P."/>
            <person name="Koningstein G."/>
            <person name="Krogh S."/>
            <person name="Kumano M."/>
            <person name="Kurita K."/>
            <person name="Lapidus A."/>
            <person name="Lardinois S."/>
            <person name="Lauber J."/>
            <person name="Lazarevic V."/>
            <person name="Lee S.-M."/>
            <person name="Levine A."/>
            <person name="Liu H."/>
            <person name="Masuda S."/>
            <person name="Mauel C."/>
            <person name="Medigue C."/>
            <person name="Medina N."/>
            <person name="Mellado R.P."/>
            <person name="Mizuno M."/>
            <person name="Moestl D."/>
            <person name="Nakai S."/>
            <person name="Noback M."/>
            <person name="Noone D."/>
            <person name="O'Reilly M."/>
            <person name="Ogawa K."/>
            <person name="Ogiwara A."/>
            <person name="Oudega B."/>
            <person name="Park S.-H."/>
            <person name="Parro V."/>
            <person name="Pohl T.M."/>
            <person name="Portetelle D."/>
            <person name="Porwollik S."/>
            <person name="Prescott A.M."/>
            <person name="Presecan E."/>
            <person name="Pujic P."/>
            <person name="Purnelle B."/>
            <person name="Rapoport G."/>
            <person name="Rey M."/>
            <person name="Reynolds S."/>
            <person name="Rieger M."/>
            <person name="Rivolta C."/>
            <person name="Rocha E."/>
            <person name="Roche B."/>
            <person name="Rose M."/>
            <person name="Sadaie Y."/>
            <person name="Sato T."/>
            <person name="Scanlan E."/>
            <person name="Schleich S."/>
            <person name="Schroeter R."/>
            <person name="Scoffone F."/>
            <person name="Sekiguchi J."/>
            <person name="Sekowska A."/>
            <person name="Seror S.J."/>
            <person name="Serror P."/>
            <person name="Shin B.-S."/>
            <person name="Soldo B."/>
            <person name="Sorokin A."/>
            <person name="Tacconi E."/>
            <person name="Takagi T."/>
            <person name="Takahashi H."/>
            <person name="Takemaru K."/>
            <person name="Takeuchi M."/>
            <person name="Tamakoshi A."/>
            <person name="Tanaka T."/>
            <person name="Terpstra P."/>
            <person name="Tognoni A."/>
            <person name="Tosato V."/>
            <person name="Uchiyama S."/>
            <person name="Vandenbol M."/>
            <person name="Vannier F."/>
            <person name="Vassarotti A."/>
            <person name="Viari A."/>
            <person name="Wambutt R."/>
            <person name="Wedler E."/>
            <person name="Wedler H."/>
            <person name="Weitzenegger T."/>
            <person name="Winters P."/>
            <person name="Wipat A."/>
            <person name="Yamamoto H."/>
            <person name="Yamane K."/>
            <person name="Yasumoto K."/>
            <person name="Yata K."/>
            <person name="Yoshida K."/>
            <person name="Yoshikawa H.-F."/>
            <person name="Zumstein E."/>
            <person name="Yoshikawa H."/>
            <person name="Danchin A."/>
        </authorList>
    </citation>
    <scope>NUCLEOTIDE SEQUENCE [LARGE SCALE GENOMIC DNA]</scope>
    <source>
        <strain>168</strain>
    </source>
</reference>
<reference evidence="5 6" key="4">
    <citation type="journal article" date="2018" name="Proc. Natl. Acad. Sci. U.S.A.">
        <title>Structural basis for antibiotic resistance mediated by the Bacillus subtilis ABCF ATPase VmlR.</title>
        <authorList>
            <person name="Crowe-McAuliffe C."/>
            <person name="Graf M."/>
            <person name="Huter P."/>
            <person name="Takada H."/>
            <person name="Abdelshahid M."/>
            <person name="Novacek J."/>
            <person name="Murina V."/>
            <person name="Atkinson G.C."/>
            <person name="Hauryliuk V."/>
            <person name="Wilson D.N."/>
        </authorList>
    </citation>
    <scope>STRUCTURE BY ELECTRON MICROSCOPY (3.10 ANGSTROMS) OF 1-207 WITH AND WITHOUT VIRGINIAMYCIN M</scope>
</reference>
<feature type="chain" id="PRO_0000129183" description="Large ribosomal subunit protein uL4">
    <location>
        <begin position="1"/>
        <end position="207"/>
    </location>
</feature>
<feature type="region of interest" description="Disordered" evidence="2">
    <location>
        <begin position="48"/>
        <end position="85"/>
    </location>
</feature>
<feature type="compositionally biased region" description="Basic residues" evidence="2">
    <location>
        <begin position="60"/>
        <end position="71"/>
    </location>
</feature>
<feature type="strand" evidence="11">
    <location>
        <begin position="3"/>
        <end position="7"/>
    </location>
</feature>
<feature type="strand" evidence="11">
    <location>
        <begin position="9"/>
        <end position="11"/>
    </location>
</feature>
<feature type="strand" evidence="11">
    <location>
        <begin position="13"/>
        <end position="18"/>
    </location>
</feature>
<feature type="helix" evidence="11">
    <location>
        <begin position="21"/>
        <end position="24"/>
    </location>
</feature>
<feature type="helix" evidence="11">
    <location>
        <begin position="30"/>
        <end position="43"/>
    </location>
</feature>
<feature type="turn" evidence="11">
    <location>
        <begin position="54"/>
        <end position="56"/>
    </location>
</feature>
<feature type="strand" evidence="8">
    <location>
        <begin position="57"/>
        <end position="59"/>
    </location>
</feature>
<feature type="strand" evidence="11">
    <location>
        <begin position="67"/>
        <end position="72"/>
    </location>
</feature>
<feature type="strand" evidence="9">
    <location>
        <begin position="77"/>
        <end position="79"/>
    </location>
</feature>
<feature type="strand" evidence="10">
    <location>
        <begin position="83"/>
        <end position="85"/>
    </location>
</feature>
<feature type="strand" evidence="10">
    <location>
        <begin position="88"/>
        <end position="90"/>
    </location>
</feature>
<feature type="helix" evidence="11">
    <location>
        <begin position="103"/>
        <end position="120"/>
    </location>
</feature>
<feature type="strand" evidence="11">
    <location>
        <begin position="123"/>
        <end position="127"/>
    </location>
</feature>
<feature type="strand" evidence="7">
    <location>
        <begin position="132"/>
        <end position="134"/>
    </location>
</feature>
<feature type="helix" evidence="11">
    <location>
        <begin position="136"/>
        <end position="145"/>
    </location>
</feature>
<feature type="strand" evidence="11">
    <location>
        <begin position="152"/>
        <end position="158"/>
    </location>
</feature>
<feature type="helix" evidence="11">
    <location>
        <begin position="161"/>
        <end position="167"/>
    </location>
</feature>
<feature type="strand" evidence="9">
    <location>
        <begin position="168"/>
        <end position="170"/>
    </location>
</feature>
<feature type="strand" evidence="11">
    <location>
        <begin position="173"/>
        <end position="178"/>
    </location>
</feature>
<feature type="helix" evidence="11">
    <location>
        <begin position="183"/>
        <end position="188"/>
    </location>
</feature>
<feature type="strand" evidence="11">
    <location>
        <begin position="189"/>
        <end position="195"/>
    </location>
</feature>
<feature type="helix" evidence="11">
    <location>
        <begin position="196"/>
        <end position="206"/>
    </location>
</feature>
<comment type="function">
    <text evidence="1">One of the primary rRNA binding proteins, this protein initially binds near the 5'-end of the 23S rRNA. It is important during the early stages of 50S assembly. It makes multiple contacts with different domains of the 23S rRNA in the assembled 50S subunit and ribosome.</text>
</comment>
<comment type="function">
    <text evidence="1">Forms part of the polypeptide exit tunnel.</text>
</comment>
<comment type="subunit">
    <text evidence="3">Part of the 50S ribosomal subunit.</text>
</comment>
<comment type="similarity">
    <text evidence="1">Belongs to the universal ribosomal protein uL4 family.</text>
</comment>
<keyword id="KW-0002">3D-structure</keyword>
<keyword id="KW-1185">Reference proteome</keyword>
<keyword id="KW-0687">Ribonucleoprotein</keyword>
<keyword id="KW-0689">Ribosomal protein</keyword>
<keyword id="KW-0694">RNA-binding</keyword>
<keyword id="KW-0699">rRNA-binding</keyword>
<sequence>MPKVALYNQNGSTAGDIELNASVFGIEPNESVVFDAILMQRASLRQGTHKVKNRSEVRGGGRKPWRQKGTGRARQGSIRSPQWRGGGVVFGPTPRSYSYKLPKKVRRLAIKSVLSSKVIDNNIIVLEDLTLDTAKTKEMAAILKGLSVEKKALIVTADANEAVALSARNIPGVTVVEANGINVLDVVNHEKLLITKAAVEKVEEVLA</sequence>